<accession>Q9LUZ9</accession>
<accession>Q4PSB0</accession>
<comment type="catalytic activity">
    <reaction evidence="5">
        <text>S-ubiquitinyl-[E2 ubiquitin-conjugating enzyme]-L-cysteine + [acceptor protein]-L-lysine = [E2 ubiquitin-conjugating enzyme]-L-cysteine + N(6)-ubiquitinyl-[acceptor protein]-L-lysine.</text>
        <dbReference type="EC" id="2.3.2.27"/>
    </reaction>
</comment>
<comment type="pathway">
    <text>Protein modification; protein ubiquitination.</text>
</comment>
<comment type="subcellular location">
    <subcellularLocation>
        <location evidence="5">Membrane</location>
        <topology evidence="5">Single-pass membrane protein</topology>
    </subcellularLocation>
</comment>
<comment type="domain">
    <text evidence="1">The RING-type zinc finger domain mediates binding to an E2 ubiquitin-conjugating enzyme.</text>
</comment>
<comment type="similarity">
    <text evidence="5">Belongs to the RING-type zinc finger family. ATL subfamily.</text>
</comment>
<gene>
    <name type="primary">ATL63</name>
    <name type="ordered locus">At5g58580</name>
    <name type="ORF">MZN1.3</name>
</gene>
<evidence type="ECO:0000250" key="1"/>
<evidence type="ECO:0000255" key="2"/>
<evidence type="ECO:0000255" key="3">
    <source>
        <dbReference type="PROSITE-ProRule" id="PRU00175"/>
    </source>
</evidence>
<evidence type="ECO:0000256" key="4">
    <source>
        <dbReference type="SAM" id="MobiDB-lite"/>
    </source>
</evidence>
<evidence type="ECO:0000305" key="5"/>
<feature type="chain" id="PRO_0000055817" description="RING-H2 finger protein ATL63">
    <location>
        <begin position="1"/>
        <end position="308"/>
    </location>
</feature>
<feature type="transmembrane region" description="Helical" evidence="2">
    <location>
        <begin position="29"/>
        <end position="49"/>
    </location>
</feature>
<feature type="zinc finger region" description="RING-type; atypical" evidence="3">
    <location>
        <begin position="138"/>
        <end position="180"/>
    </location>
</feature>
<feature type="region of interest" description="Disordered" evidence="4">
    <location>
        <begin position="252"/>
        <end position="308"/>
    </location>
</feature>
<feature type="compositionally biased region" description="Low complexity" evidence="4">
    <location>
        <begin position="272"/>
        <end position="291"/>
    </location>
</feature>
<reference key="1">
    <citation type="journal article" date="2000" name="DNA Res.">
        <title>Structural analysis of Arabidopsis thaliana chromosome 5. X. Sequence features of the regions of 3,076,755 bp covered by sixty P1 and TAC clones.</title>
        <authorList>
            <person name="Sato S."/>
            <person name="Nakamura Y."/>
            <person name="Kaneko T."/>
            <person name="Katoh T."/>
            <person name="Asamizu E."/>
            <person name="Kotani H."/>
            <person name="Tabata S."/>
        </authorList>
    </citation>
    <scope>NUCLEOTIDE SEQUENCE [LARGE SCALE GENOMIC DNA]</scope>
    <source>
        <strain>cv. Columbia</strain>
    </source>
</reference>
<reference key="2">
    <citation type="journal article" date="2017" name="Plant J.">
        <title>Araport11: a complete reannotation of the Arabidopsis thaliana reference genome.</title>
        <authorList>
            <person name="Cheng C.Y."/>
            <person name="Krishnakumar V."/>
            <person name="Chan A.P."/>
            <person name="Thibaud-Nissen F."/>
            <person name="Schobel S."/>
            <person name="Town C.D."/>
        </authorList>
    </citation>
    <scope>GENOME REANNOTATION</scope>
    <source>
        <strain>cv. Columbia</strain>
    </source>
</reference>
<reference key="3">
    <citation type="submission" date="2005-05" db="EMBL/GenBank/DDBJ databases">
        <authorList>
            <person name="Underwood B.A."/>
            <person name="Xiao Y.-L."/>
            <person name="Moskal W.A. Jr."/>
            <person name="Monaghan E.L."/>
            <person name="Wang W."/>
            <person name="Redman J.C."/>
            <person name="Wu H.C."/>
            <person name="Utterback T."/>
            <person name="Town C.D."/>
        </authorList>
    </citation>
    <scope>NUCLEOTIDE SEQUENCE [LARGE SCALE MRNA]</scope>
    <source>
        <strain>cv. Columbia</strain>
    </source>
</reference>
<reference key="4">
    <citation type="journal article" date="2002" name="Genome Biol.">
        <title>Evaluation and classification of RING-finger domains encoded by the Arabidopsis genome.</title>
        <authorList>
            <person name="Kosarev P."/>
            <person name="Mayer K.F.X."/>
            <person name="Hardtke C.S."/>
        </authorList>
    </citation>
    <scope>GENE FAMILY ORGANIZATION</scope>
</reference>
<reference key="5">
    <citation type="journal article" date="2006" name="J. Mol. Evol.">
        <title>The ATL gene family from Arabidopsis thaliana and Oryza sativa comprises a large number of putative ubiquitin ligases of the RING-H2 type.</title>
        <authorList>
            <person name="Serrano M."/>
            <person name="Parra S."/>
            <person name="Alcaraz L.D."/>
            <person name="Guzman P."/>
        </authorList>
    </citation>
    <scope>NOMENCLATURE</scope>
    <scope>GENE FAMILY ORGANIZATION</scope>
</reference>
<protein>
    <recommendedName>
        <fullName>RING-H2 finger protein ATL63</fullName>
        <ecNumber evidence="5">2.3.2.27</ecNumber>
    </recommendedName>
    <alternativeName>
        <fullName>Protein ARABIDOPSIS TOXICOS EN LEVADURA 63</fullName>
        <shortName>Protein ATL63</shortName>
    </alternativeName>
    <alternativeName>
        <fullName evidence="5">RING-type E3 ubiquitin transferase ATL63</fullName>
    </alternativeName>
</protein>
<sequence length="308" mass="34295">MSEEDGGSMSVKSSLSSFLKILSSYNSNVLLAALVFLLLVVLFVLLLHFYARFFWSPSHQDFSAAARHRRRRRRNRRRTVTTTRIIPSLPLGGFDDGVSSPAATATRDDKGLDSSVISSIPLFVYEENEEEEDEEEECVICLGLWEAGDFGRKLRNCGHGFHVECIDMWLSSHSTCPLCRSPVLAAVSDEENLKLAVNAVEEEAEVRLQMSPAGENESNVSGDRRVSLSLSVMEDDLKTGDDDGEEEVRIEVFDDDEEINDGGTRSDRRRSMSMTSSASSSLMRMLSSSSSRSERNKVFPTARQDSSK</sequence>
<keyword id="KW-0472">Membrane</keyword>
<keyword id="KW-0479">Metal-binding</keyword>
<keyword id="KW-1185">Reference proteome</keyword>
<keyword id="KW-0808">Transferase</keyword>
<keyword id="KW-0812">Transmembrane</keyword>
<keyword id="KW-1133">Transmembrane helix</keyword>
<keyword id="KW-0833">Ubl conjugation pathway</keyword>
<keyword id="KW-0862">Zinc</keyword>
<keyword id="KW-0863">Zinc-finger</keyword>
<proteinExistence type="evidence at transcript level"/>
<organism>
    <name type="scientific">Arabidopsis thaliana</name>
    <name type="common">Mouse-ear cress</name>
    <dbReference type="NCBI Taxonomy" id="3702"/>
    <lineage>
        <taxon>Eukaryota</taxon>
        <taxon>Viridiplantae</taxon>
        <taxon>Streptophyta</taxon>
        <taxon>Embryophyta</taxon>
        <taxon>Tracheophyta</taxon>
        <taxon>Spermatophyta</taxon>
        <taxon>Magnoliopsida</taxon>
        <taxon>eudicotyledons</taxon>
        <taxon>Gunneridae</taxon>
        <taxon>Pentapetalae</taxon>
        <taxon>rosids</taxon>
        <taxon>malvids</taxon>
        <taxon>Brassicales</taxon>
        <taxon>Brassicaceae</taxon>
        <taxon>Camelineae</taxon>
        <taxon>Arabidopsis</taxon>
    </lineage>
</organism>
<dbReference type="EC" id="2.3.2.27" evidence="5"/>
<dbReference type="EMBL" id="AB020755">
    <property type="protein sequence ID" value="BAA97327.1"/>
    <property type="molecule type" value="Genomic_DNA"/>
</dbReference>
<dbReference type="EMBL" id="CP002688">
    <property type="protein sequence ID" value="AED97072.1"/>
    <property type="molecule type" value="Genomic_DNA"/>
</dbReference>
<dbReference type="EMBL" id="DQ056726">
    <property type="protein sequence ID" value="AAY78870.1"/>
    <property type="molecule type" value="mRNA"/>
</dbReference>
<dbReference type="RefSeq" id="NP_200666.1">
    <property type="nucleotide sequence ID" value="NM_125245.2"/>
</dbReference>
<dbReference type="SMR" id="Q9LUZ9"/>
<dbReference type="BioGRID" id="21216">
    <property type="interactions" value="5"/>
</dbReference>
<dbReference type="STRING" id="3702.Q9LUZ9"/>
<dbReference type="PaxDb" id="3702-AT5G58580.1"/>
<dbReference type="ProteomicsDB" id="246765"/>
<dbReference type="EnsemblPlants" id="AT5G58580.1">
    <property type="protein sequence ID" value="AT5G58580.1"/>
    <property type="gene ID" value="AT5G58580"/>
</dbReference>
<dbReference type="GeneID" id="835972"/>
<dbReference type="Gramene" id="AT5G58580.1">
    <property type="protein sequence ID" value="AT5G58580.1"/>
    <property type="gene ID" value="AT5G58580"/>
</dbReference>
<dbReference type="KEGG" id="ath:AT5G58580"/>
<dbReference type="Araport" id="AT5G58580"/>
<dbReference type="TAIR" id="AT5G58580">
    <property type="gene designation" value="ATL63"/>
</dbReference>
<dbReference type="eggNOG" id="KOG0800">
    <property type="taxonomic scope" value="Eukaryota"/>
</dbReference>
<dbReference type="HOGENOM" id="CLU_066543_2_0_1"/>
<dbReference type="InParanoid" id="Q9LUZ9"/>
<dbReference type="OMA" id="ARFFWSP"/>
<dbReference type="PhylomeDB" id="Q9LUZ9"/>
<dbReference type="BRENDA" id="2.3.2.27">
    <property type="organism ID" value="399"/>
</dbReference>
<dbReference type="UniPathway" id="UPA00143"/>
<dbReference type="PRO" id="PR:Q9LUZ9"/>
<dbReference type="Proteomes" id="UP000006548">
    <property type="component" value="Chromosome 5"/>
</dbReference>
<dbReference type="ExpressionAtlas" id="Q9LUZ9">
    <property type="expression patterns" value="baseline and differential"/>
</dbReference>
<dbReference type="GO" id="GO:0005769">
    <property type="term" value="C:early endosome"/>
    <property type="evidence" value="ECO:0000314"/>
    <property type="project" value="TAIR"/>
</dbReference>
<dbReference type="GO" id="GO:0005768">
    <property type="term" value="C:endosome"/>
    <property type="evidence" value="ECO:0000314"/>
    <property type="project" value="TAIR"/>
</dbReference>
<dbReference type="GO" id="GO:0005798">
    <property type="term" value="C:Golgi-associated vesicle"/>
    <property type="evidence" value="ECO:0000314"/>
    <property type="project" value="TAIR"/>
</dbReference>
<dbReference type="GO" id="GO:0005886">
    <property type="term" value="C:plasma membrane"/>
    <property type="evidence" value="ECO:0000314"/>
    <property type="project" value="TAIR"/>
</dbReference>
<dbReference type="GO" id="GO:0016740">
    <property type="term" value="F:transferase activity"/>
    <property type="evidence" value="ECO:0007669"/>
    <property type="project" value="UniProtKB-KW"/>
</dbReference>
<dbReference type="GO" id="GO:0031625">
    <property type="term" value="F:ubiquitin protein ligase binding"/>
    <property type="evidence" value="ECO:0000314"/>
    <property type="project" value="TAIR"/>
</dbReference>
<dbReference type="GO" id="GO:0008270">
    <property type="term" value="F:zinc ion binding"/>
    <property type="evidence" value="ECO:0007669"/>
    <property type="project" value="UniProtKB-KW"/>
</dbReference>
<dbReference type="GO" id="GO:0071470">
    <property type="term" value="P:cellular response to osmotic stress"/>
    <property type="evidence" value="ECO:0000315"/>
    <property type="project" value="TAIR"/>
</dbReference>
<dbReference type="GO" id="GO:0016567">
    <property type="term" value="P:protein ubiquitination"/>
    <property type="evidence" value="ECO:0007669"/>
    <property type="project" value="UniProtKB-UniPathway"/>
</dbReference>
<dbReference type="GO" id="GO:0030100">
    <property type="term" value="P:regulation of endocytosis"/>
    <property type="evidence" value="ECO:0000315"/>
    <property type="project" value="TAIR"/>
</dbReference>
<dbReference type="GO" id="GO:1903426">
    <property type="term" value="P:regulation of reactive oxygen species biosynthetic process"/>
    <property type="evidence" value="ECO:0000315"/>
    <property type="project" value="TAIR"/>
</dbReference>
<dbReference type="GO" id="GO:1901000">
    <property type="term" value="P:regulation of response to salt stress"/>
    <property type="evidence" value="ECO:0000315"/>
    <property type="project" value="TAIR"/>
</dbReference>
<dbReference type="CDD" id="cd16461">
    <property type="entry name" value="RING-H2_EL5-like"/>
    <property type="match status" value="1"/>
</dbReference>
<dbReference type="FunFam" id="3.30.40.10:FF:000609">
    <property type="entry name" value="RING-H2 finger protein ATL1"/>
    <property type="match status" value="1"/>
</dbReference>
<dbReference type="Gene3D" id="3.30.40.10">
    <property type="entry name" value="Zinc/RING finger domain, C3HC4 (zinc finger)"/>
    <property type="match status" value="1"/>
</dbReference>
<dbReference type="InterPro" id="IPR044600">
    <property type="entry name" value="ATL1/ATL16-like"/>
</dbReference>
<dbReference type="InterPro" id="IPR001841">
    <property type="entry name" value="Znf_RING"/>
</dbReference>
<dbReference type="InterPro" id="IPR013083">
    <property type="entry name" value="Znf_RING/FYVE/PHD"/>
</dbReference>
<dbReference type="PANTHER" id="PTHR46913">
    <property type="entry name" value="RING-H2 FINGER PROTEIN ATL16"/>
    <property type="match status" value="1"/>
</dbReference>
<dbReference type="PANTHER" id="PTHR46913:SF1">
    <property type="entry name" value="RING-H2 FINGER PROTEIN ATL16"/>
    <property type="match status" value="1"/>
</dbReference>
<dbReference type="Pfam" id="PF13639">
    <property type="entry name" value="zf-RING_2"/>
    <property type="match status" value="1"/>
</dbReference>
<dbReference type="SMART" id="SM00184">
    <property type="entry name" value="RING"/>
    <property type="match status" value="1"/>
</dbReference>
<dbReference type="SUPFAM" id="SSF57850">
    <property type="entry name" value="RING/U-box"/>
    <property type="match status" value="1"/>
</dbReference>
<dbReference type="PROSITE" id="PS50089">
    <property type="entry name" value="ZF_RING_2"/>
    <property type="match status" value="1"/>
</dbReference>
<name>ATL63_ARATH</name>